<dbReference type="EMBL" id="AF036246">
    <property type="protein sequence ID" value="AAB88552.1"/>
    <property type="molecule type" value="Genomic_DNA"/>
</dbReference>
<dbReference type="EMBL" id="AJ235273">
    <property type="protein sequence ID" value="CAA15228.1"/>
    <property type="molecule type" value="Genomic_DNA"/>
</dbReference>
<dbReference type="PIR" id="D71641">
    <property type="entry name" value="D71641"/>
</dbReference>
<dbReference type="RefSeq" id="NP_221152.1">
    <property type="nucleotide sequence ID" value="NC_000963.1"/>
</dbReference>
<dbReference type="RefSeq" id="WP_004596901.1">
    <property type="nucleotide sequence ID" value="NC_000963.1"/>
</dbReference>
<dbReference type="SMR" id="O50289"/>
<dbReference type="STRING" id="272947.gene:17555871"/>
<dbReference type="EnsemblBacteria" id="CAA15228">
    <property type="protein sequence ID" value="CAA15228"/>
    <property type="gene ID" value="CAA15228"/>
</dbReference>
<dbReference type="GeneID" id="57569924"/>
<dbReference type="KEGG" id="rpr:RP802"/>
<dbReference type="PATRIC" id="fig|272947.5.peg.838"/>
<dbReference type="eggNOG" id="COG0224">
    <property type="taxonomic scope" value="Bacteria"/>
</dbReference>
<dbReference type="HOGENOM" id="CLU_050669_0_1_5"/>
<dbReference type="OrthoDB" id="9812769at2"/>
<dbReference type="Proteomes" id="UP000002480">
    <property type="component" value="Chromosome"/>
</dbReference>
<dbReference type="GO" id="GO:0005886">
    <property type="term" value="C:plasma membrane"/>
    <property type="evidence" value="ECO:0007669"/>
    <property type="project" value="UniProtKB-SubCell"/>
</dbReference>
<dbReference type="GO" id="GO:0045259">
    <property type="term" value="C:proton-transporting ATP synthase complex"/>
    <property type="evidence" value="ECO:0007669"/>
    <property type="project" value="UniProtKB-KW"/>
</dbReference>
<dbReference type="GO" id="GO:0005524">
    <property type="term" value="F:ATP binding"/>
    <property type="evidence" value="ECO:0007669"/>
    <property type="project" value="UniProtKB-UniRule"/>
</dbReference>
<dbReference type="GO" id="GO:0046933">
    <property type="term" value="F:proton-transporting ATP synthase activity, rotational mechanism"/>
    <property type="evidence" value="ECO:0007669"/>
    <property type="project" value="UniProtKB-UniRule"/>
</dbReference>
<dbReference type="GO" id="GO:0042777">
    <property type="term" value="P:proton motive force-driven plasma membrane ATP synthesis"/>
    <property type="evidence" value="ECO:0007669"/>
    <property type="project" value="UniProtKB-UniRule"/>
</dbReference>
<dbReference type="CDD" id="cd12151">
    <property type="entry name" value="F1-ATPase_gamma"/>
    <property type="match status" value="1"/>
</dbReference>
<dbReference type="Gene3D" id="3.40.1380.10">
    <property type="match status" value="1"/>
</dbReference>
<dbReference type="Gene3D" id="1.10.287.80">
    <property type="entry name" value="ATP synthase, gamma subunit, helix hairpin domain"/>
    <property type="match status" value="1"/>
</dbReference>
<dbReference type="HAMAP" id="MF_00815">
    <property type="entry name" value="ATP_synth_gamma_bact"/>
    <property type="match status" value="1"/>
</dbReference>
<dbReference type="InterPro" id="IPR035968">
    <property type="entry name" value="ATP_synth_F1_ATPase_gsu"/>
</dbReference>
<dbReference type="InterPro" id="IPR000131">
    <property type="entry name" value="ATP_synth_F1_gsu"/>
</dbReference>
<dbReference type="InterPro" id="IPR023632">
    <property type="entry name" value="ATP_synth_F1_gsu_CS"/>
</dbReference>
<dbReference type="NCBIfam" id="TIGR01146">
    <property type="entry name" value="ATPsyn_F1gamma"/>
    <property type="match status" value="1"/>
</dbReference>
<dbReference type="PANTHER" id="PTHR11693">
    <property type="entry name" value="ATP SYNTHASE GAMMA CHAIN"/>
    <property type="match status" value="1"/>
</dbReference>
<dbReference type="PANTHER" id="PTHR11693:SF22">
    <property type="entry name" value="ATP SYNTHASE SUBUNIT GAMMA, MITOCHONDRIAL"/>
    <property type="match status" value="1"/>
</dbReference>
<dbReference type="Pfam" id="PF00231">
    <property type="entry name" value="ATP-synt"/>
    <property type="match status" value="1"/>
</dbReference>
<dbReference type="PRINTS" id="PR00126">
    <property type="entry name" value="ATPASEGAMMA"/>
</dbReference>
<dbReference type="SUPFAM" id="SSF52943">
    <property type="entry name" value="ATP synthase (F1-ATPase), gamma subunit"/>
    <property type="match status" value="1"/>
</dbReference>
<dbReference type="PROSITE" id="PS00153">
    <property type="entry name" value="ATPASE_GAMMA"/>
    <property type="match status" value="1"/>
</dbReference>
<feature type="chain" id="PRO_0000073362" description="ATP synthase gamma chain">
    <location>
        <begin position="1"/>
        <end position="288"/>
    </location>
</feature>
<comment type="function">
    <text evidence="1">Produces ATP from ADP in the presence of a proton gradient across the membrane. The gamma chain is believed to be important in regulating ATPase activity and the flow of protons through the CF(0) complex.</text>
</comment>
<comment type="subunit">
    <text evidence="1">F-type ATPases have 2 components, CF(1) - the catalytic core - and CF(0) - the membrane proton channel. CF(1) has five subunits: alpha(3), beta(3), gamma(1), delta(1), epsilon(1). CF(0) has three main subunits: a, b and c.</text>
</comment>
<comment type="subcellular location">
    <subcellularLocation>
        <location evidence="1">Cell inner membrane</location>
        <topology evidence="1">Peripheral membrane protein</topology>
    </subcellularLocation>
</comment>
<comment type="similarity">
    <text evidence="1">Belongs to the ATPase gamma chain family.</text>
</comment>
<protein>
    <recommendedName>
        <fullName evidence="1">ATP synthase gamma chain</fullName>
    </recommendedName>
    <alternativeName>
        <fullName evidence="1">ATP synthase F1 sector gamma subunit</fullName>
    </alternativeName>
    <alternativeName>
        <fullName evidence="1">F-ATPase gamma subunit</fullName>
    </alternativeName>
</protein>
<accession>O50289</accession>
<proteinExistence type="inferred from homology"/>
<keyword id="KW-0066">ATP synthesis</keyword>
<keyword id="KW-0997">Cell inner membrane</keyword>
<keyword id="KW-1003">Cell membrane</keyword>
<keyword id="KW-0139">CF(1)</keyword>
<keyword id="KW-0375">Hydrogen ion transport</keyword>
<keyword id="KW-0406">Ion transport</keyword>
<keyword id="KW-0472">Membrane</keyword>
<keyword id="KW-1185">Reference proteome</keyword>
<keyword id="KW-0813">Transport</keyword>
<name>ATPG_RICPR</name>
<evidence type="ECO:0000255" key="1">
    <source>
        <dbReference type="HAMAP-Rule" id="MF_00815"/>
    </source>
</evidence>
<gene>
    <name evidence="1" type="primary">atpG</name>
    <name type="ordered locus">RP802</name>
</gene>
<organism>
    <name type="scientific">Rickettsia prowazekii (strain Madrid E)</name>
    <dbReference type="NCBI Taxonomy" id="272947"/>
    <lineage>
        <taxon>Bacteria</taxon>
        <taxon>Pseudomonadati</taxon>
        <taxon>Pseudomonadota</taxon>
        <taxon>Alphaproteobacteria</taxon>
        <taxon>Rickettsiales</taxon>
        <taxon>Rickettsiaceae</taxon>
        <taxon>Rickettsieae</taxon>
        <taxon>Rickettsia</taxon>
        <taxon>typhus group</taxon>
    </lineage>
</organism>
<sequence length="288" mass="32943">MSNLKQLRTRIKSVKSTQKITKAMQLVSASKMTKIKTQIANSNFYIEAINKMMSDICSMTSCELSIEEQKFFNTMPSKINLLIVMTSERGLCGMFNYSIIKQVKNDIKELTNKGEQIKLIIIGKKGYEALKRQYANYINSYFEFTKIHSENLILQVKEKIMCAVKNLEVSNCIIYFNKFKNAMTQIPTKQKILPIEKHQDYSVVANDYFEYEGKNLISNLINLYVHAKINYALLQNIVSEEGARMTAMENATNNANDLISKLVLKLNRSRQTIITTELIEIIAGAEAV</sequence>
<reference key="1">
    <citation type="submission" date="1997-11" db="EMBL/GenBank/DDBJ databases">
        <authorList>
            <person name="Beati L."/>
            <person name="Regnery R.L."/>
        </authorList>
    </citation>
    <scope>NUCLEOTIDE SEQUENCE [GENOMIC DNA]</scope>
    <source>
        <strain>F-12</strain>
    </source>
</reference>
<reference key="2">
    <citation type="journal article" date="1998" name="Nature">
        <title>The genome sequence of Rickettsia prowazekii and the origin of mitochondria.</title>
        <authorList>
            <person name="Andersson S.G.E."/>
            <person name="Zomorodipour A."/>
            <person name="Andersson J.O."/>
            <person name="Sicheritz-Ponten T."/>
            <person name="Alsmark U.C.M."/>
            <person name="Podowski R.M."/>
            <person name="Naeslund A.K."/>
            <person name="Eriksson A.-S."/>
            <person name="Winkler H.H."/>
            <person name="Kurland C.G."/>
        </authorList>
    </citation>
    <scope>NUCLEOTIDE SEQUENCE [LARGE SCALE GENOMIC DNA]</scope>
    <source>
        <strain>Madrid E</strain>
    </source>
</reference>